<reference key="1">
    <citation type="journal article" date="2000" name="Curr. Microbiol.">
        <title>Identification of a lexA gene in, and construction of a lexA mutant of, Xanthomonas campestris pv. citri.</title>
        <authorList>
            <person name="Yang M.-K."/>
            <person name="Wu P.-I."/>
            <person name="Yang Y.-C."/>
        </authorList>
    </citation>
    <scope>NUCLEOTIDE SEQUENCE [GENOMIC DNA]</scope>
    <scope>DNA-BINDING SPECIFICITY</scope>
    <source>
        <strain>XW47</strain>
    </source>
</reference>
<dbReference type="EC" id="3.4.21.88" evidence="2"/>
<dbReference type="EMBL" id="AF081945">
    <property type="protein sequence ID" value="AAC31950.1"/>
    <property type="molecule type" value="Genomic_DNA"/>
</dbReference>
<dbReference type="RefSeq" id="WP_005915033.1">
    <property type="nucleotide sequence ID" value="NZ_PPHE01000011.1"/>
</dbReference>
<dbReference type="SMR" id="P60512"/>
<dbReference type="MEROPS" id="S24.001"/>
<dbReference type="GeneID" id="66910889"/>
<dbReference type="OMA" id="HVWLLPH"/>
<dbReference type="GO" id="GO:0003677">
    <property type="term" value="F:DNA binding"/>
    <property type="evidence" value="ECO:0007669"/>
    <property type="project" value="UniProtKB-UniRule"/>
</dbReference>
<dbReference type="GO" id="GO:0004252">
    <property type="term" value="F:serine-type endopeptidase activity"/>
    <property type="evidence" value="ECO:0007669"/>
    <property type="project" value="UniProtKB-UniRule"/>
</dbReference>
<dbReference type="GO" id="GO:0006281">
    <property type="term" value="P:DNA repair"/>
    <property type="evidence" value="ECO:0007669"/>
    <property type="project" value="UniProtKB-UniRule"/>
</dbReference>
<dbReference type="GO" id="GO:0006260">
    <property type="term" value="P:DNA replication"/>
    <property type="evidence" value="ECO:0007669"/>
    <property type="project" value="UniProtKB-UniRule"/>
</dbReference>
<dbReference type="GO" id="GO:0045892">
    <property type="term" value="P:negative regulation of DNA-templated transcription"/>
    <property type="evidence" value="ECO:0007669"/>
    <property type="project" value="UniProtKB-UniRule"/>
</dbReference>
<dbReference type="GO" id="GO:0006508">
    <property type="term" value="P:proteolysis"/>
    <property type="evidence" value="ECO:0007669"/>
    <property type="project" value="InterPro"/>
</dbReference>
<dbReference type="GO" id="GO:0009432">
    <property type="term" value="P:SOS response"/>
    <property type="evidence" value="ECO:0007669"/>
    <property type="project" value="UniProtKB-UniRule"/>
</dbReference>
<dbReference type="CDD" id="cd06529">
    <property type="entry name" value="S24_LexA-like"/>
    <property type="match status" value="1"/>
</dbReference>
<dbReference type="FunFam" id="1.10.10.10:FF:000009">
    <property type="entry name" value="LexA repressor"/>
    <property type="match status" value="1"/>
</dbReference>
<dbReference type="FunFam" id="2.10.109.10:FF:000001">
    <property type="entry name" value="LexA repressor"/>
    <property type="match status" value="1"/>
</dbReference>
<dbReference type="Gene3D" id="2.10.109.10">
    <property type="entry name" value="Umud Fragment, subunit A"/>
    <property type="match status" value="1"/>
</dbReference>
<dbReference type="Gene3D" id="1.10.10.10">
    <property type="entry name" value="Winged helix-like DNA-binding domain superfamily/Winged helix DNA-binding domain"/>
    <property type="match status" value="1"/>
</dbReference>
<dbReference type="HAMAP" id="MF_00015">
    <property type="entry name" value="LexA"/>
    <property type="match status" value="1"/>
</dbReference>
<dbReference type="InterPro" id="IPR006200">
    <property type="entry name" value="LexA"/>
</dbReference>
<dbReference type="InterPro" id="IPR039418">
    <property type="entry name" value="LexA-like"/>
</dbReference>
<dbReference type="InterPro" id="IPR036286">
    <property type="entry name" value="LexA/Signal_pep-like_sf"/>
</dbReference>
<dbReference type="InterPro" id="IPR006199">
    <property type="entry name" value="LexA_DNA-bd_dom"/>
</dbReference>
<dbReference type="InterPro" id="IPR050077">
    <property type="entry name" value="LexA_repressor"/>
</dbReference>
<dbReference type="InterPro" id="IPR006197">
    <property type="entry name" value="Peptidase_S24_LexA"/>
</dbReference>
<dbReference type="InterPro" id="IPR015927">
    <property type="entry name" value="Peptidase_S24_S26A/B/C"/>
</dbReference>
<dbReference type="InterPro" id="IPR036388">
    <property type="entry name" value="WH-like_DNA-bd_sf"/>
</dbReference>
<dbReference type="InterPro" id="IPR036390">
    <property type="entry name" value="WH_DNA-bd_sf"/>
</dbReference>
<dbReference type="NCBIfam" id="TIGR00498">
    <property type="entry name" value="lexA"/>
    <property type="match status" value="1"/>
</dbReference>
<dbReference type="PANTHER" id="PTHR33516">
    <property type="entry name" value="LEXA REPRESSOR"/>
    <property type="match status" value="1"/>
</dbReference>
<dbReference type="PANTHER" id="PTHR33516:SF2">
    <property type="entry name" value="LEXA REPRESSOR-RELATED"/>
    <property type="match status" value="1"/>
</dbReference>
<dbReference type="Pfam" id="PF01726">
    <property type="entry name" value="LexA_DNA_bind"/>
    <property type="match status" value="1"/>
</dbReference>
<dbReference type="Pfam" id="PF00717">
    <property type="entry name" value="Peptidase_S24"/>
    <property type="match status" value="1"/>
</dbReference>
<dbReference type="PRINTS" id="PR00726">
    <property type="entry name" value="LEXASERPTASE"/>
</dbReference>
<dbReference type="SUPFAM" id="SSF51306">
    <property type="entry name" value="LexA/Signal peptidase"/>
    <property type="match status" value="1"/>
</dbReference>
<dbReference type="SUPFAM" id="SSF46785">
    <property type="entry name" value="Winged helix' DNA-binding domain"/>
    <property type="match status" value="1"/>
</dbReference>
<organism>
    <name type="scientific">Xanthomonas citri</name>
    <name type="common">Xanthomonas campestris pv. citri</name>
    <dbReference type="NCBI Taxonomy" id="346"/>
    <lineage>
        <taxon>Bacteria</taxon>
        <taxon>Pseudomonadati</taxon>
        <taxon>Pseudomonadota</taxon>
        <taxon>Gammaproteobacteria</taxon>
        <taxon>Lysobacterales</taxon>
        <taxon>Lysobacteraceae</taxon>
        <taxon>Xanthomonas</taxon>
    </lineage>
</organism>
<protein>
    <recommendedName>
        <fullName evidence="2">LexA repressor</fullName>
        <ecNumber evidence="2">3.4.21.88</ecNumber>
    </recommendedName>
</protein>
<proteinExistence type="evidence at protein level"/>
<feature type="chain" id="PRO_0000170108" description="LexA repressor">
    <location>
        <begin position="1"/>
        <end position="213"/>
    </location>
</feature>
<feature type="DNA-binding region" description="H-T-H motif" evidence="2">
    <location>
        <begin position="27"/>
        <end position="47"/>
    </location>
</feature>
<feature type="active site" description="For autocatalytic cleavage activity" evidence="2">
    <location>
        <position position="133"/>
    </location>
</feature>
<feature type="active site" description="For autocatalytic cleavage activity" evidence="2">
    <location>
        <position position="170"/>
    </location>
</feature>
<feature type="site" description="Cleavage; by autolysis" evidence="2">
    <location>
        <begin position="98"/>
        <end position="99"/>
    </location>
</feature>
<name>LEXA_XANCI</name>
<comment type="function">
    <text evidence="1">Represses a number of genes involved in the response to DNA damage (SOS response), including recA and lexA. Has been shown to bind to the palindromic sequence 5'-CTG-N(8-12)-C-[TC]-G. In the presence of single-stranded DNA, RecA interacts with LexA causing an autocatalytic cleavage which disrupts the DNA-binding part of LexA, leading to derepression of the SOS regulon and eventually DNA repair (By similarity).</text>
</comment>
<comment type="catalytic activity">
    <reaction evidence="2">
        <text>Hydrolysis of Ala-|-Gly bond in repressor LexA.</text>
        <dbReference type="EC" id="3.4.21.88"/>
    </reaction>
</comment>
<comment type="subunit">
    <text evidence="2">Homodimer.</text>
</comment>
<comment type="similarity">
    <text evidence="2">Belongs to the peptidase S24 family.</text>
</comment>
<accession>P60512</accession>
<accession>O86050</accession>
<keyword id="KW-0068">Autocatalytic cleavage</keyword>
<keyword id="KW-0227">DNA damage</keyword>
<keyword id="KW-0234">DNA repair</keyword>
<keyword id="KW-0235">DNA replication</keyword>
<keyword id="KW-0238">DNA-binding</keyword>
<keyword id="KW-0378">Hydrolase</keyword>
<keyword id="KW-0678">Repressor</keyword>
<keyword id="KW-0742">SOS response</keyword>
<keyword id="KW-0804">Transcription</keyword>
<keyword id="KW-0805">Transcription regulation</keyword>
<sequence length="213" mass="23240">MDLTDTQQAILALIAERIDADGVPPSQTEIARAFGFKGIRAAQYHLEALEHAGAIRRVPGQARGIRLAGQGAQTRTAPVSEVARDDVLRLPVLGRVAAGLPIGADIGSDDFVVLDRVFFSPSPDYLLKVQGDSMRDEGIFNGDLIGVHRTRDARSGQIVVARIDEEITVKLLKIGKDRIRLLPRNPDYAPIEVLPDQDFAIEGLYCGLLRPNR</sequence>
<evidence type="ECO:0000250" key="1"/>
<evidence type="ECO:0000255" key="2">
    <source>
        <dbReference type="HAMAP-Rule" id="MF_00015"/>
    </source>
</evidence>
<gene>
    <name evidence="2" type="primary">lexA</name>
</gene>